<dbReference type="EMBL" id="U40219">
    <property type="protein sequence ID" value="AAA85273.1"/>
    <property type="molecule type" value="mRNA"/>
</dbReference>
<dbReference type="SMR" id="Q40787"/>
<dbReference type="GO" id="GO:0005886">
    <property type="term" value="C:plasma membrane"/>
    <property type="evidence" value="ECO:0007669"/>
    <property type="project" value="UniProtKB-SubCell"/>
</dbReference>
<dbReference type="GO" id="GO:0005774">
    <property type="term" value="C:vacuolar membrane"/>
    <property type="evidence" value="ECO:0007669"/>
    <property type="project" value="TreeGrafter"/>
</dbReference>
<dbReference type="GO" id="GO:0005525">
    <property type="term" value="F:GTP binding"/>
    <property type="evidence" value="ECO:0007669"/>
    <property type="project" value="UniProtKB-KW"/>
</dbReference>
<dbReference type="GO" id="GO:0003924">
    <property type="term" value="F:GTPase activity"/>
    <property type="evidence" value="ECO:0007669"/>
    <property type="project" value="InterPro"/>
</dbReference>
<dbReference type="GO" id="GO:0015031">
    <property type="term" value="P:protein transport"/>
    <property type="evidence" value="ECO:0007669"/>
    <property type="project" value="UniProtKB-KW"/>
</dbReference>
<dbReference type="CDD" id="cd01862">
    <property type="entry name" value="Rab7"/>
    <property type="match status" value="1"/>
</dbReference>
<dbReference type="FunFam" id="3.40.50.300:FF:000295">
    <property type="entry name" value="Ras-related protein Rab7"/>
    <property type="match status" value="1"/>
</dbReference>
<dbReference type="Gene3D" id="3.40.50.300">
    <property type="entry name" value="P-loop containing nucleotide triphosphate hydrolases"/>
    <property type="match status" value="1"/>
</dbReference>
<dbReference type="InterPro" id="IPR027417">
    <property type="entry name" value="P-loop_NTPase"/>
</dbReference>
<dbReference type="InterPro" id="IPR005225">
    <property type="entry name" value="Small_GTP-bd"/>
</dbReference>
<dbReference type="InterPro" id="IPR001806">
    <property type="entry name" value="Small_GTPase"/>
</dbReference>
<dbReference type="NCBIfam" id="TIGR00231">
    <property type="entry name" value="small_GTP"/>
    <property type="match status" value="1"/>
</dbReference>
<dbReference type="PANTHER" id="PTHR47981">
    <property type="entry name" value="RAB FAMILY"/>
    <property type="match status" value="1"/>
</dbReference>
<dbReference type="PANTHER" id="PTHR47981:SF4">
    <property type="entry name" value="RAS-RELATED PROTEIN RABG3F"/>
    <property type="match status" value="1"/>
</dbReference>
<dbReference type="Pfam" id="PF00071">
    <property type="entry name" value="Ras"/>
    <property type="match status" value="1"/>
</dbReference>
<dbReference type="PRINTS" id="PR00449">
    <property type="entry name" value="RASTRNSFRMNG"/>
</dbReference>
<dbReference type="SMART" id="SM00175">
    <property type="entry name" value="RAB"/>
    <property type="match status" value="1"/>
</dbReference>
<dbReference type="SMART" id="SM00176">
    <property type="entry name" value="RAN"/>
    <property type="match status" value="1"/>
</dbReference>
<dbReference type="SMART" id="SM00173">
    <property type="entry name" value="RAS"/>
    <property type="match status" value="1"/>
</dbReference>
<dbReference type="SMART" id="SM00174">
    <property type="entry name" value="RHO"/>
    <property type="match status" value="1"/>
</dbReference>
<dbReference type="SUPFAM" id="SSF52540">
    <property type="entry name" value="P-loop containing nucleoside triphosphate hydrolases"/>
    <property type="match status" value="1"/>
</dbReference>
<dbReference type="PROSITE" id="PS51419">
    <property type="entry name" value="RAB"/>
    <property type="match status" value="1"/>
</dbReference>
<comment type="function">
    <text evidence="1">Protein transport. Probably involved in vesicular traffic (By similarity).</text>
</comment>
<comment type="subcellular location">
    <subcellularLocation>
        <location evidence="2">Cell membrane</location>
        <topology evidence="2">Lipid-anchor</topology>
        <orientation evidence="2">Cytoplasmic side</orientation>
    </subcellularLocation>
</comment>
<comment type="similarity">
    <text evidence="2">Belongs to the small GTPase superfamily. Rab family.</text>
</comment>
<sequence length="206" mass="22996">MASRRRTLLKVIILGDSGVGKTSLMNQYVNKKFSNQYKATIGADFLTKEVQFEDRLFTLQIWDTAGQERFQSLGVAFYRGADCCVLVYDVNSMKSFDNLNNWREEFLIQASPSDPDNFPFVLLGNKVDVDGGNSRVVSEKKAKAWCASKGNIPYFETSAKEGTNVEDAFQCIVKNALKNEPEEELYVPDTVDVVGGNRAQRSSGCC</sequence>
<protein>
    <recommendedName>
        <fullName>Ras-related protein Rab7</fullName>
    </recommendedName>
</protein>
<accession>Q40787</accession>
<reference key="1">
    <citation type="online journal article" date="1995" name="Plant Gene Register">
        <title>A novel cDNA encoding a rab7-related small GTP-binding protein in Pennisetum ciliare (buffelgrass).</title>
        <authorList>
            <person name="Gustine D.L."/>
            <person name="Hulce D.A."/>
            <person name="Moyer B.G."/>
        </authorList>
        <locator>PGR95-132</locator>
    </citation>
    <scope>NUCLEOTIDE SEQUENCE [MRNA]</scope>
    <source>
        <strain>Higgins</strain>
        <tissue>Flower</tissue>
    </source>
</reference>
<keyword id="KW-1003">Cell membrane</keyword>
<keyword id="KW-0342">GTP-binding</keyword>
<keyword id="KW-0449">Lipoprotein</keyword>
<keyword id="KW-0472">Membrane</keyword>
<keyword id="KW-0547">Nucleotide-binding</keyword>
<keyword id="KW-0636">Prenylation</keyword>
<keyword id="KW-0653">Protein transport</keyword>
<keyword id="KW-0813">Transport</keyword>
<proteinExistence type="evidence at transcript level"/>
<feature type="chain" id="PRO_0000121284" description="Ras-related protein Rab7">
    <location>
        <begin position="1"/>
        <end position="206"/>
    </location>
</feature>
<feature type="binding site" evidence="1">
    <location>
        <begin position="15"/>
        <end position="22"/>
    </location>
    <ligand>
        <name>GTP</name>
        <dbReference type="ChEBI" id="CHEBI:37565"/>
    </ligand>
</feature>
<feature type="binding site" evidence="1">
    <location>
        <begin position="63"/>
        <end position="67"/>
    </location>
    <ligand>
        <name>GTP</name>
        <dbReference type="ChEBI" id="CHEBI:37565"/>
    </ligand>
</feature>
<feature type="binding site" evidence="1">
    <location>
        <begin position="125"/>
        <end position="128"/>
    </location>
    <ligand>
        <name>GTP</name>
        <dbReference type="ChEBI" id="CHEBI:37565"/>
    </ligand>
</feature>
<feature type="lipid moiety-binding region" description="S-geranylgeranyl cysteine" evidence="1">
    <location>
        <position position="205"/>
    </location>
</feature>
<feature type="lipid moiety-binding region" description="S-geranylgeranyl cysteine" evidence="1">
    <location>
        <position position="206"/>
    </location>
</feature>
<evidence type="ECO:0000250" key="1"/>
<evidence type="ECO:0000305" key="2"/>
<organism>
    <name type="scientific">Cenchrus ciliaris</name>
    <name type="common">Buffelgrass</name>
    <name type="synonym">Pennisetum ciliare</name>
    <dbReference type="NCBI Taxonomy" id="35872"/>
    <lineage>
        <taxon>Eukaryota</taxon>
        <taxon>Viridiplantae</taxon>
        <taxon>Streptophyta</taxon>
        <taxon>Embryophyta</taxon>
        <taxon>Tracheophyta</taxon>
        <taxon>Spermatophyta</taxon>
        <taxon>Magnoliopsida</taxon>
        <taxon>Liliopsida</taxon>
        <taxon>Poales</taxon>
        <taxon>Poaceae</taxon>
        <taxon>PACMAD clade</taxon>
        <taxon>Panicoideae</taxon>
        <taxon>Panicodae</taxon>
        <taxon>Paniceae</taxon>
        <taxon>Cenchrinae</taxon>
        <taxon>Cenchrus</taxon>
    </lineage>
</organism>
<name>RAB7_CENCI</name>